<accession>B7M9A2</accession>
<reference key="1">
    <citation type="journal article" date="2009" name="PLoS Genet.">
        <title>Organised genome dynamics in the Escherichia coli species results in highly diverse adaptive paths.</title>
        <authorList>
            <person name="Touchon M."/>
            <person name="Hoede C."/>
            <person name="Tenaillon O."/>
            <person name="Barbe V."/>
            <person name="Baeriswyl S."/>
            <person name="Bidet P."/>
            <person name="Bingen E."/>
            <person name="Bonacorsi S."/>
            <person name="Bouchier C."/>
            <person name="Bouvet O."/>
            <person name="Calteau A."/>
            <person name="Chiapello H."/>
            <person name="Clermont O."/>
            <person name="Cruveiller S."/>
            <person name="Danchin A."/>
            <person name="Diard M."/>
            <person name="Dossat C."/>
            <person name="Karoui M.E."/>
            <person name="Frapy E."/>
            <person name="Garry L."/>
            <person name="Ghigo J.M."/>
            <person name="Gilles A.M."/>
            <person name="Johnson J."/>
            <person name="Le Bouguenec C."/>
            <person name="Lescat M."/>
            <person name="Mangenot S."/>
            <person name="Martinez-Jehanne V."/>
            <person name="Matic I."/>
            <person name="Nassif X."/>
            <person name="Oztas S."/>
            <person name="Petit M.A."/>
            <person name="Pichon C."/>
            <person name="Rouy Z."/>
            <person name="Ruf C.S."/>
            <person name="Schneider D."/>
            <person name="Tourret J."/>
            <person name="Vacherie B."/>
            <person name="Vallenet D."/>
            <person name="Medigue C."/>
            <person name="Rocha E.P.C."/>
            <person name="Denamur E."/>
        </authorList>
    </citation>
    <scope>NUCLEOTIDE SEQUENCE [LARGE SCALE GENOMIC DNA]</scope>
    <source>
        <strain>IAI1</strain>
    </source>
</reference>
<evidence type="ECO:0000255" key="1">
    <source>
        <dbReference type="HAMAP-Rule" id="MF_01083"/>
    </source>
</evidence>
<dbReference type="EC" id="1.14.11.64" evidence="1"/>
<dbReference type="EMBL" id="CU928160">
    <property type="protein sequence ID" value="CAQ99581.1"/>
    <property type="molecule type" value="Genomic_DNA"/>
</dbReference>
<dbReference type="RefSeq" id="WP_000993087.1">
    <property type="nucleotide sequence ID" value="NC_011741.1"/>
</dbReference>
<dbReference type="SMR" id="B7M9A2"/>
<dbReference type="KEGG" id="ecr:ECIAI1_2755"/>
<dbReference type="HOGENOM" id="CLU_075277_0_0_6"/>
<dbReference type="GO" id="GO:0008198">
    <property type="term" value="F:ferrous iron binding"/>
    <property type="evidence" value="ECO:0007669"/>
    <property type="project" value="UniProtKB-UniRule"/>
</dbReference>
<dbReference type="GO" id="GO:0106343">
    <property type="term" value="F:glutarate dioxygenase activity"/>
    <property type="evidence" value="ECO:0007669"/>
    <property type="project" value="UniProtKB-EC"/>
</dbReference>
<dbReference type="GO" id="GO:0050498">
    <property type="term" value="F:oxidoreductase activity, acting on paired donors, with incorporation or reduction of molecular oxygen, with 2-oxoglutarate as one donor, and the other dehydrogenated"/>
    <property type="evidence" value="ECO:0007669"/>
    <property type="project" value="UniProtKB-UniRule"/>
</dbReference>
<dbReference type="GO" id="GO:0019477">
    <property type="term" value="P:L-lysine catabolic process"/>
    <property type="evidence" value="ECO:0007669"/>
    <property type="project" value="UniProtKB-UniRule"/>
</dbReference>
<dbReference type="CDD" id="cd00250">
    <property type="entry name" value="CAS_like"/>
    <property type="match status" value="1"/>
</dbReference>
<dbReference type="FunFam" id="3.60.130.10:FF:000004">
    <property type="entry name" value="Glutarate 2-hydroxylase"/>
    <property type="match status" value="1"/>
</dbReference>
<dbReference type="Gene3D" id="3.60.130.10">
    <property type="entry name" value="Clavaminate synthase-like"/>
    <property type="match status" value="1"/>
</dbReference>
<dbReference type="HAMAP" id="MF_01083">
    <property type="entry name" value="glutarate_hydroxylase"/>
    <property type="match status" value="1"/>
</dbReference>
<dbReference type="InterPro" id="IPR015038">
    <property type="entry name" value="GlaH"/>
</dbReference>
<dbReference type="InterPro" id="IPR042098">
    <property type="entry name" value="TauD-like_sf"/>
</dbReference>
<dbReference type="NCBIfam" id="NF002814">
    <property type="entry name" value="PRK02963.1"/>
    <property type="match status" value="1"/>
</dbReference>
<dbReference type="Pfam" id="PF08943">
    <property type="entry name" value="CsiD"/>
    <property type="match status" value="1"/>
</dbReference>
<dbReference type="SUPFAM" id="SSF51197">
    <property type="entry name" value="Clavaminate synthase-like"/>
    <property type="match status" value="1"/>
</dbReference>
<comment type="function">
    <text evidence="1">Acts as an alpha-ketoglutarate-dependent dioxygenase catalyzing hydroxylation of glutarate (GA) to L-2-hydroxyglutarate (L2HG). Functions in a L-lysine degradation pathway that proceeds via cadaverine, glutarate and L-2-hydroxyglutarate.</text>
</comment>
<comment type="catalytic activity">
    <reaction evidence="1">
        <text>glutarate + 2-oxoglutarate + O2 = (S)-2-hydroxyglutarate + succinate + CO2</text>
        <dbReference type="Rhea" id="RHEA:13821"/>
        <dbReference type="ChEBI" id="CHEBI:15379"/>
        <dbReference type="ChEBI" id="CHEBI:16526"/>
        <dbReference type="ChEBI" id="CHEBI:16782"/>
        <dbReference type="ChEBI" id="CHEBI:16810"/>
        <dbReference type="ChEBI" id="CHEBI:30031"/>
        <dbReference type="ChEBI" id="CHEBI:30921"/>
        <dbReference type="EC" id="1.14.11.64"/>
    </reaction>
    <physiologicalReaction direction="left-to-right" evidence="1">
        <dbReference type="Rhea" id="RHEA:13822"/>
    </physiologicalReaction>
</comment>
<comment type="cofactor">
    <cofactor evidence="1">
        <name>Fe(2+)</name>
        <dbReference type="ChEBI" id="CHEBI:29033"/>
    </cofactor>
    <text evidence="1">Binds 1 Fe(2+) ion per subunit.</text>
</comment>
<comment type="pathway">
    <text evidence="1">Amino-acid degradation.</text>
</comment>
<comment type="subunit">
    <text evidence="1">Homotetramer.</text>
</comment>
<comment type="similarity">
    <text evidence="1">Belongs to the glutarate hydroxylase family.</text>
</comment>
<name>GLAH_ECO8A</name>
<keyword id="KW-0223">Dioxygenase</keyword>
<keyword id="KW-0408">Iron</keyword>
<keyword id="KW-0479">Metal-binding</keyword>
<keyword id="KW-0560">Oxidoreductase</keyword>
<organism>
    <name type="scientific">Escherichia coli O8 (strain IAI1)</name>
    <dbReference type="NCBI Taxonomy" id="585034"/>
    <lineage>
        <taxon>Bacteria</taxon>
        <taxon>Pseudomonadati</taxon>
        <taxon>Pseudomonadota</taxon>
        <taxon>Gammaproteobacteria</taxon>
        <taxon>Enterobacterales</taxon>
        <taxon>Enterobacteriaceae</taxon>
        <taxon>Escherichia</taxon>
    </lineage>
</organism>
<sequence length="325" mass="37384">MNALTAVHNNAVDSGQDYSGFTLIPSAQSPRLLELTFTEQTTKQFLEQVAEWPVQALEYKSFLRFRVGKILDDLCANQLQPLLLKTLLNRAEGALLINAVGIDDVAQADEMVKLATAVAHLIGRSNFDAMSGQYYARFVVKNVDNSDSYLRQPHRVMELHNDGTYVEEITDYVLMMKIDEQNMQGGNSLLLHLDDWEHLDHYFRHPLARRPMRFAAPPSKNVSKDVFHPVFDVDQQGRPVMRYIDQFVQPKDFEEGVWLSELSDAIETSKGILSVPVPVGKFLLINNLFWLHGRDRFTPHPDLRRELMRQRGYFAYATHHYQTHQ</sequence>
<gene>
    <name evidence="1" type="primary">glaH</name>
    <name type="ordered locus">ECIAI1_2755</name>
</gene>
<proteinExistence type="inferred from homology"/>
<feature type="chain" id="PRO_1000136866" description="Glutarate 2-hydroxylase">
    <location>
        <begin position="1"/>
        <end position="325"/>
    </location>
</feature>
<feature type="binding site" evidence="1">
    <location>
        <position position="160"/>
    </location>
    <ligand>
        <name>Fe cation</name>
        <dbReference type="ChEBI" id="CHEBI:24875"/>
    </ligand>
</feature>
<feature type="binding site" evidence="1">
    <location>
        <position position="162"/>
    </location>
    <ligand>
        <name>Fe cation</name>
        <dbReference type="ChEBI" id="CHEBI:24875"/>
    </ligand>
</feature>
<feature type="binding site" evidence="1">
    <location>
        <position position="292"/>
    </location>
    <ligand>
        <name>Fe cation</name>
        <dbReference type="ChEBI" id="CHEBI:24875"/>
    </ligand>
</feature>
<protein>
    <recommendedName>
        <fullName evidence="1">Glutarate 2-hydroxylase</fullName>
        <shortName evidence="1">G-2-H</shortName>
        <ecNumber evidence="1">1.14.11.64</ecNumber>
    </recommendedName>
</protein>